<proteinExistence type="inferred from homology"/>
<reference key="1">
    <citation type="journal article" date="2002" name="Science">
        <title>50 million years of genomic stasis in endosymbiotic bacteria.</title>
        <authorList>
            <person name="Tamas I."/>
            <person name="Klasson L."/>
            <person name="Canbaeck B."/>
            <person name="Naeslund A.K."/>
            <person name="Eriksson A.-S."/>
            <person name="Wernegreen J.J."/>
            <person name="Sandstroem J.P."/>
            <person name="Moran N.A."/>
            <person name="Andersson S.G.E."/>
        </authorList>
    </citation>
    <scope>NUCLEOTIDE SEQUENCE [LARGE SCALE GENOMIC DNA]</scope>
    <source>
        <strain>Sg</strain>
    </source>
</reference>
<accession>Q8K9H2</accession>
<keyword id="KW-0963">Cytoplasm</keyword>
<keyword id="KW-0690">Ribosome biogenesis</keyword>
<name>RBFA_BUCAP</name>
<organism>
    <name type="scientific">Buchnera aphidicola subsp. Schizaphis graminum (strain Sg)</name>
    <dbReference type="NCBI Taxonomy" id="198804"/>
    <lineage>
        <taxon>Bacteria</taxon>
        <taxon>Pseudomonadati</taxon>
        <taxon>Pseudomonadota</taxon>
        <taxon>Gammaproteobacteria</taxon>
        <taxon>Enterobacterales</taxon>
        <taxon>Erwiniaceae</taxon>
        <taxon>Buchnera</taxon>
    </lineage>
</organism>
<feature type="chain" id="PRO_0000102635" description="Ribosome-binding factor A">
    <location>
        <begin position="1"/>
        <end position="124"/>
    </location>
</feature>
<sequence length="124" mass="14440">MDKLFNRSFRIAQELQKNIAFIIQHSLKDPRIKTIITVSEVRLSKDLSYAQVFVSFLETNSNLTVKKVLILLNRASGYIRKLLCKKMNLRIIPIIVFFHDDSFFKGNKISKLLNILTEKNNITL</sequence>
<evidence type="ECO:0000255" key="1">
    <source>
        <dbReference type="HAMAP-Rule" id="MF_00003"/>
    </source>
</evidence>
<protein>
    <recommendedName>
        <fullName evidence="1">Ribosome-binding factor A</fullName>
    </recommendedName>
</protein>
<dbReference type="EMBL" id="AE013218">
    <property type="protein sequence ID" value="AAM67917.1"/>
    <property type="molecule type" value="Genomic_DNA"/>
</dbReference>
<dbReference type="RefSeq" id="WP_011053884.1">
    <property type="nucleotide sequence ID" value="NC_004061.1"/>
</dbReference>
<dbReference type="SMR" id="Q8K9H2"/>
<dbReference type="STRING" id="198804.BUsg_364"/>
<dbReference type="GeneID" id="93003834"/>
<dbReference type="KEGG" id="bas:BUsg_364"/>
<dbReference type="eggNOG" id="COG0858">
    <property type="taxonomic scope" value="Bacteria"/>
</dbReference>
<dbReference type="HOGENOM" id="CLU_089475_3_2_6"/>
<dbReference type="Proteomes" id="UP000000416">
    <property type="component" value="Chromosome"/>
</dbReference>
<dbReference type="GO" id="GO:0005829">
    <property type="term" value="C:cytosol"/>
    <property type="evidence" value="ECO:0007669"/>
    <property type="project" value="TreeGrafter"/>
</dbReference>
<dbReference type="GO" id="GO:0043024">
    <property type="term" value="F:ribosomal small subunit binding"/>
    <property type="evidence" value="ECO:0007669"/>
    <property type="project" value="TreeGrafter"/>
</dbReference>
<dbReference type="GO" id="GO:0030490">
    <property type="term" value="P:maturation of SSU-rRNA"/>
    <property type="evidence" value="ECO:0007669"/>
    <property type="project" value="UniProtKB-UniRule"/>
</dbReference>
<dbReference type="Gene3D" id="3.30.300.20">
    <property type="match status" value="1"/>
</dbReference>
<dbReference type="HAMAP" id="MF_00003">
    <property type="entry name" value="RbfA"/>
    <property type="match status" value="1"/>
</dbReference>
<dbReference type="InterPro" id="IPR015946">
    <property type="entry name" value="KH_dom-like_a/b"/>
</dbReference>
<dbReference type="InterPro" id="IPR000238">
    <property type="entry name" value="RbfA"/>
</dbReference>
<dbReference type="InterPro" id="IPR023799">
    <property type="entry name" value="RbfA_dom_sf"/>
</dbReference>
<dbReference type="InterPro" id="IPR020053">
    <property type="entry name" value="Ribosome-bd_factorA_CS"/>
</dbReference>
<dbReference type="NCBIfam" id="TIGR00082">
    <property type="entry name" value="rbfA"/>
    <property type="match status" value="1"/>
</dbReference>
<dbReference type="PANTHER" id="PTHR33515">
    <property type="entry name" value="RIBOSOME-BINDING FACTOR A, CHLOROPLASTIC-RELATED"/>
    <property type="match status" value="1"/>
</dbReference>
<dbReference type="PANTHER" id="PTHR33515:SF1">
    <property type="entry name" value="RIBOSOME-BINDING FACTOR A, CHLOROPLASTIC-RELATED"/>
    <property type="match status" value="1"/>
</dbReference>
<dbReference type="Pfam" id="PF02033">
    <property type="entry name" value="RBFA"/>
    <property type="match status" value="1"/>
</dbReference>
<dbReference type="SUPFAM" id="SSF89919">
    <property type="entry name" value="Ribosome-binding factor A, RbfA"/>
    <property type="match status" value="1"/>
</dbReference>
<dbReference type="PROSITE" id="PS01319">
    <property type="entry name" value="RBFA"/>
    <property type="match status" value="1"/>
</dbReference>
<comment type="function">
    <text evidence="1">One of several proteins that assist in the late maturation steps of the functional core of the 30S ribosomal subunit. Associates with free 30S ribosomal subunits (but not with 30S subunits that are part of 70S ribosomes or polysomes). Required for efficient processing of 16S rRNA. May interact with the 5'-terminal helix region of 16S rRNA.</text>
</comment>
<comment type="subunit">
    <text evidence="1">Monomer. Binds 30S ribosomal subunits, but not 50S ribosomal subunits or 70S ribosomes.</text>
</comment>
<comment type="subcellular location">
    <subcellularLocation>
        <location evidence="1">Cytoplasm</location>
    </subcellularLocation>
</comment>
<comment type="similarity">
    <text evidence="1">Belongs to the RbfA family.</text>
</comment>
<gene>
    <name evidence="1" type="primary">rbfA</name>
    <name type="ordered locus">BUsg_364</name>
</gene>